<feature type="peptide" id="PRO_0000044903" description="Potassium channel toxin alpha-KTx 2.5" evidence="3">
    <location>
        <begin position="1"/>
        <end position="39"/>
    </location>
</feature>
<feature type="site" description="Basic residue of the functional dyad" evidence="1">
    <location>
        <position position="28"/>
    </location>
</feature>
<feature type="site" description="Aromatic residue of the functional dyad" evidence="1">
    <location>
        <position position="37"/>
    </location>
</feature>
<feature type="disulfide bond" evidence="2">
    <location>
        <begin position="7"/>
        <end position="29"/>
    </location>
</feature>
<feature type="disulfide bond" evidence="2">
    <location>
        <begin position="13"/>
        <end position="34"/>
    </location>
</feature>
<feature type="disulfide bond" evidence="2">
    <location>
        <begin position="17"/>
        <end position="36"/>
    </location>
</feature>
<feature type="mutagenesis site" description="No loss of activity." evidence="2">
    <original>A</original>
    <variation>C</variation>
    <location>
        <position position="19"/>
    </location>
</feature>
<feature type="mutagenesis site" description="No loss of activity; when associated with F-37." evidence="2">
    <original>A</original>
    <variation>Y</variation>
    <location>
        <position position="19"/>
    </location>
</feature>
<feature type="mutagenesis site" description="No loss of activity; when associated with Y-19." evidence="2">
    <original>Y</original>
    <variation>F</variation>
    <location>
        <position position="37"/>
    </location>
</feature>
<feature type="strand" evidence="7">
    <location>
        <begin position="8"/>
        <end position="10"/>
    </location>
</feature>
<feature type="helix" evidence="7">
    <location>
        <begin position="11"/>
        <end position="13"/>
    </location>
</feature>
<feature type="helix" evidence="7">
    <location>
        <begin position="14"/>
        <end position="20"/>
    </location>
</feature>
<feature type="strand" evidence="7">
    <location>
        <begin position="26"/>
        <end position="30"/>
    </location>
</feature>
<feature type="strand" evidence="7">
    <location>
        <begin position="33"/>
        <end position="37"/>
    </location>
</feature>
<keyword id="KW-0002">3D-structure</keyword>
<keyword id="KW-0903">Direct protein sequencing</keyword>
<keyword id="KW-1015">Disulfide bond</keyword>
<keyword id="KW-0872">Ion channel impairing toxin</keyword>
<keyword id="KW-0528">Neurotoxin</keyword>
<keyword id="KW-0632">Potassium channel impairing toxin</keyword>
<keyword id="KW-0964">Secreted</keyword>
<keyword id="KW-0800">Toxin</keyword>
<keyword id="KW-1220">Voltage-gated potassium channel impairing toxin</keyword>
<protein>
    <recommendedName>
        <fullName>Potassium channel toxin alpha-KTx 2.5</fullName>
    </recommendedName>
    <alternativeName>
        <fullName evidence="4">Hongotoxin-1</fullName>
        <shortName evidence="4">HgTX1</shortName>
    </alternativeName>
</protein>
<sequence>TVIDVKCTSPKQCLPPCKAQFGIRAGAKCMNGKCKCYPH</sequence>
<evidence type="ECO:0000250" key="1"/>
<evidence type="ECO:0000269" key="2">
    <source>
    </source>
</evidence>
<evidence type="ECO:0000269" key="3">
    <source>
    </source>
</evidence>
<evidence type="ECO:0000303" key="4">
    <source>
    </source>
</evidence>
<evidence type="ECO:0000305" key="5"/>
<evidence type="ECO:0000305" key="6">
    <source>
    </source>
</evidence>
<evidence type="ECO:0007829" key="7">
    <source>
        <dbReference type="PDB" id="1HLY"/>
    </source>
</evidence>
<proteinExistence type="evidence at protein level"/>
<reference key="1">
    <citation type="journal article" date="1998" name="J. Biol. Chem.">
        <title>Subunit composition of brain voltage-gated potassium channels determined by hongotoxin-1, a novel peptide derived from Centruroides limbatus venom.</title>
        <authorList>
            <person name="Koschak A."/>
            <person name="Bugianesi R.M."/>
            <person name="Mitterdorfer J."/>
            <person name="Kaczorowski G.J."/>
            <person name="Garcia M.L."/>
            <person name="Knaus H.-G."/>
        </authorList>
    </citation>
    <scope>PROTEIN SEQUENCE</scope>
    <scope>FUNCTION</scope>
    <scope>ACTIVITY PROFILE</scope>
    <scope>MUTAGENESIS OF ALA-19 AND TYR-37</scope>
    <scope>SUBCELLULAR LOCATION</scope>
    <source>
        <tissue>Venom</tissue>
    </source>
</reference>
<reference key="2">
    <citation type="journal article" date="2019" name="FEBS Lett.">
        <title>Scorpion toxins interact with nicotinic acetylcholine receptors.</title>
        <authorList>
            <person name="Kasheverov I.E."/>
            <person name="Oparin P.B."/>
            <person name="Zhmak M.N."/>
            <person name="Egorova N.S."/>
            <person name="Ivanov I.A."/>
            <person name="Gigolaev A.M."/>
            <person name="Nekrasova O.V."/>
            <person name="Serebryakova M.V."/>
            <person name="Kudryavtsev D.S."/>
            <person name="Prokopev N.A."/>
            <person name="Hoang A.N."/>
            <person name="Tsetlin V.I."/>
            <person name="Vassilevski A.A."/>
            <person name="Utkin Y.N."/>
        </authorList>
    </citation>
    <scope>FUNCTION</scope>
    <scope>RECOMBINANT EXPRESSION</scope>
</reference>
<reference key="3">
    <citation type="journal article" date="2002" name="Bioconj. Chem.">
        <title>Synthesis, characterization, and application of cy-dye- and alexa-dye-labeled hongotoxin(1) analogues. The first high affinity fluorescence probes for voltage-gated K+ channels.</title>
        <authorList>
            <person name="Pragl B."/>
            <person name="Koschak A."/>
            <person name="Trieb M."/>
            <person name="Obermair G."/>
            <person name="Kaufmann W.A."/>
            <person name="Gerster U."/>
            <person name="Blanc E."/>
            <person name="Hahn C."/>
            <person name="Prinz H."/>
            <person name="Schuetz G."/>
            <person name="Darbon H."/>
            <person name="Gruber H.J."/>
            <person name="Knaus H.-G."/>
        </authorList>
    </citation>
    <scope>STRUCTURE BY NMR</scope>
    <scope>DISULFIDE BONDS</scope>
    <scope>MASS SPECTROMETRY</scope>
    <scope>MUTAGENESIS OF ALA-19 AND TYR-37</scope>
    <source>
        <tissue>Venom</tissue>
    </source>
</reference>
<accession>P59847</accession>
<comment type="function">
    <text evidence="3">Potent selective inhibitor of Kv1.1/KCNA1, Kv1.2/KCNA2, Kv1.3/KCNA3 voltage-gated potassium channels (PubMed:9446567). Weak inhibitor of Kv1.6/KCNA6 potassium channel (PubMed:9446567). It also shows a weak interaction with nicotinic acetylcholine receptors (nAChR), suggesting it may weakly inhibit it (PubMed:31276191).</text>
</comment>
<comment type="subcellular location">
    <subcellularLocation>
        <location evidence="3">Secreted</location>
    </subcellularLocation>
</comment>
<comment type="tissue specificity">
    <text evidence="6">Expressed by the venom gland.</text>
</comment>
<comment type="domain">
    <text evidence="2">Has the structural arrangement of an alpha-helix connected to a beta-sheet by disulfide bonds (CSalpha/beta).</text>
</comment>
<comment type="mass spectrometry"/>
<comment type="miscellaneous">
    <text evidence="3">Negative results: does not block Kv1.4/KCNA4 and Kv1.5/KCNA5 currents.</text>
</comment>
<comment type="similarity">
    <text evidence="5">Belongs to the short scorpion toxin superfamily. Potassium channel inhibitor family. Alpha-KTx 02 subfamily.</text>
</comment>
<dbReference type="PDB" id="1HLY">
    <property type="method" value="NMR"/>
    <property type="chains" value="A=1-39"/>
</dbReference>
<dbReference type="PDBsum" id="1HLY"/>
<dbReference type="SMR" id="P59847"/>
<dbReference type="EvolutionaryTrace" id="P59847"/>
<dbReference type="GO" id="GO:0005576">
    <property type="term" value="C:extracellular region"/>
    <property type="evidence" value="ECO:0007669"/>
    <property type="project" value="UniProtKB-SubCell"/>
</dbReference>
<dbReference type="GO" id="GO:0008200">
    <property type="term" value="F:ion channel inhibitor activity"/>
    <property type="evidence" value="ECO:0007669"/>
    <property type="project" value="InterPro"/>
</dbReference>
<dbReference type="GO" id="GO:0015459">
    <property type="term" value="F:potassium channel regulator activity"/>
    <property type="evidence" value="ECO:0007669"/>
    <property type="project" value="UniProtKB-KW"/>
</dbReference>
<dbReference type="GO" id="GO:0090729">
    <property type="term" value="F:toxin activity"/>
    <property type="evidence" value="ECO:0007669"/>
    <property type="project" value="UniProtKB-KW"/>
</dbReference>
<dbReference type="FunFam" id="3.30.30.10:FF:000009">
    <property type="entry name" value="Potassium channel toxin alpha-KTx 4.3"/>
    <property type="match status" value="1"/>
</dbReference>
<dbReference type="Gene3D" id="3.30.30.10">
    <property type="entry name" value="Knottin, scorpion toxin-like"/>
    <property type="match status" value="1"/>
</dbReference>
<dbReference type="InterPro" id="IPR036574">
    <property type="entry name" value="Scorpion_toxin-like_sf"/>
</dbReference>
<dbReference type="InterPro" id="IPR001947">
    <property type="entry name" value="Scorpion_toxinS_K_inh"/>
</dbReference>
<dbReference type="Pfam" id="PF00451">
    <property type="entry name" value="Toxin_2"/>
    <property type="match status" value="1"/>
</dbReference>
<dbReference type="PRINTS" id="PR00286">
    <property type="entry name" value="CHARYBDTOXIN"/>
</dbReference>
<dbReference type="SUPFAM" id="SSF57095">
    <property type="entry name" value="Scorpion toxin-like"/>
    <property type="match status" value="1"/>
</dbReference>
<dbReference type="PROSITE" id="PS01138">
    <property type="entry name" value="SCORP_SHORT_TOXIN"/>
    <property type="match status" value="1"/>
</dbReference>
<name>KAX25_CENLM</name>
<organism>
    <name type="scientific">Centruroides limbatus</name>
    <name type="common">Bark scorpion</name>
    <dbReference type="NCBI Taxonomy" id="244936"/>
    <lineage>
        <taxon>Eukaryota</taxon>
        <taxon>Metazoa</taxon>
        <taxon>Ecdysozoa</taxon>
        <taxon>Arthropoda</taxon>
        <taxon>Chelicerata</taxon>
        <taxon>Arachnida</taxon>
        <taxon>Scorpiones</taxon>
        <taxon>Buthida</taxon>
        <taxon>Buthoidea</taxon>
        <taxon>Buthidae</taxon>
        <taxon>Centruroides</taxon>
    </lineage>
</organism>